<proteinExistence type="evidence at protein level"/>
<comment type="function">
    <text evidence="3 5 6">Since they lack a putative transactivation domain, the small Mafs behave as transcriptional repressors when they dimerize among themselves (PubMed:8932385). However, they seem to serve as transcriptional activators by dimerizing with other (usually larger) basic-zipper proteins, such as NFE2L1/NRF1, and recruiting them to specific DNA-binding sites. Interacts with the upstream promoter region of the oxytocin receptor gene (PubMed:16549056, PubMed:8932385). May be a transcriptional enhancer in the up-regulation of the oxytocin receptor gene at parturition (PubMed:10527846).</text>
</comment>
<comment type="subunit">
    <text evidence="5 6">Monomer and homo- or heterodimer. Interacts with MIP (PubMed:16549056). Forms high affinity heterodimers with members of the CNC-bZIP family such as NFE2L1/NRF1 (PubMed:8932385).</text>
</comment>
<comment type="interaction">
    <interactant intactId="EBI-721128">
        <id>Q9ULX9</id>
    </interactant>
    <interactant intactId="EBI-712767">
        <id>P18847</id>
        <label>ATF3</label>
    </interactant>
    <organismsDiffer>false</organismsDiffer>
    <experiments>2</experiments>
</comment>
<comment type="interaction">
    <interactant intactId="EBI-721128">
        <id>Q9ULX9</id>
    </interactant>
    <interactant intactId="EBI-1263541">
        <id>O14867</id>
        <label>BACH1</label>
    </interactant>
    <organismsDiffer>false</organismsDiffer>
    <experiments>6</experiments>
</comment>
<comment type="interaction">
    <interactant intactId="EBI-721128">
        <id>Q9ULX9</id>
    </interactant>
    <interactant intactId="EBI-1642333">
        <id>Q9BYV9</id>
        <label>BACH2</label>
    </interactant>
    <organismsDiffer>false</organismsDiffer>
    <experiments>5</experiments>
</comment>
<comment type="interaction">
    <interactant intactId="EBI-721128">
        <id>Q9ULX9</id>
    </interactant>
    <interactant intactId="EBI-742695">
        <id>Q8N1L9</id>
        <label>BATF2</label>
    </interactant>
    <organismsDiffer>false</organismsDiffer>
    <experiments>2</experiments>
</comment>
<comment type="interaction">
    <interactant intactId="EBI-721128">
        <id>Q9ULX9</id>
    </interactant>
    <interactant intactId="EBI-10312707">
        <id>Q9NR55</id>
        <label>BATF3</label>
    </interactant>
    <organismsDiffer>false</organismsDiffer>
    <experiments>2</experiments>
</comment>
<comment type="interaction">
    <interactant intactId="EBI-721128">
        <id>Q9ULX9</id>
    </interactant>
    <interactant intactId="EBI-713514">
        <id>O15525</id>
        <label>MAFG</label>
    </interactant>
    <organismsDiffer>false</organismsDiffer>
    <experiments>2</experiments>
</comment>
<comment type="interaction">
    <interactant intactId="EBI-721128">
        <id>Q9ULX9</id>
    </interactant>
    <interactant intactId="EBI-2804436">
        <id>Q14494</id>
        <label>NFE2L1</label>
    </interactant>
    <organismsDiffer>false</organismsDiffer>
    <experiments>4</experiments>
</comment>
<comment type="interaction">
    <interactant intactId="EBI-721128">
        <id>Q9ULX9</id>
    </interactant>
    <interactant intactId="EBI-2007911">
        <id>Q16236</id>
        <label>NFE2L2</label>
    </interactant>
    <organismsDiffer>false</organismsDiffer>
    <experiments>6</experiments>
</comment>
<comment type="interaction">
    <interactant intactId="EBI-721128">
        <id>Q9ULX9</id>
    </interactant>
    <interactant intactId="EBI-10890629">
        <id>Q9Y4A8</id>
        <label>NFE2L3</label>
    </interactant>
    <organismsDiffer>false</organismsDiffer>
    <experiments>5</experiments>
</comment>
<comment type="interaction">
    <interactant intactId="EBI-721128">
        <id>Q9ULX9</id>
    </interactant>
    <interactant intactId="EBI-3951858">
        <id>Q16649</id>
        <label>NFIL3</label>
    </interactant>
    <organismsDiffer>false</organismsDiffer>
    <experiments>2</experiments>
</comment>
<comment type="subcellular location">
    <subcellularLocation>
        <location>Nucleus</location>
    </subcellularLocation>
</comment>
<comment type="alternative products">
    <event type="alternative splicing"/>
    <isoform>
        <id>Q9ULX9-1</id>
        <name>1</name>
        <sequence type="displayed"/>
    </isoform>
    <isoform>
        <id>Q9ULX9-2</id>
        <name>2</name>
        <sequence type="described" ref="VSP_043029"/>
    </isoform>
</comment>
<comment type="tissue specificity">
    <text>Expressed in the term myometrium and kidney.</text>
</comment>
<comment type="induction">
    <text evidence="4">By oxidative stress.</text>
</comment>
<comment type="similarity">
    <text evidence="8">Belongs to the bZIP family. Maf subfamily.</text>
</comment>
<dbReference type="EMBL" id="AB025247">
    <property type="protein sequence ID" value="BAA86871.1"/>
    <property type="molecule type" value="mRNA"/>
</dbReference>
<dbReference type="EMBL" id="AJ010857">
    <property type="protein sequence ID" value="CAB52435.1"/>
    <property type="molecule type" value="mRNA"/>
</dbReference>
<dbReference type="EMBL" id="AK002001">
    <property type="protein sequence ID" value="BAA92029.1"/>
    <property type="molecule type" value="mRNA"/>
</dbReference>
<dbReference type="EMBL" id="AK300932">
    <property type="protein sequence ID" value="BAG62561.1"/>
    <property type="molecule type" value="mRNA"/>
</dbReference>
<dbReference type="EMBL" id="AL021977">
    <property type="status" value="NOT_ANNOTATED_CDS"/>
    <property type="molecule type" value="Genomic_DNA"/>
</dbReference>
<dbReference type="EMBL" id="BC015037">
    <property type="protein sequence ID" value="AAH15037.1"/>
    <property type="molecule type" value="mRNA"/>
</dbReference>
<dbReference type="EMBL" id="BC067751">
    <property type="protein sequence ID" value="AAH67751.1"/>
    <property type="molecule type" value="mRNA"/>
</dbReference>
<dbReference type="CCDS" id="CCDS13968.1">
    <molecule id="Q9ULX9-1"/>
</dbReference>
<dbReference type="CCDS" id="CCDS54528.1">
    <molecule id="Q9ULX9-2"/>
</dbReference>
<dbReference type="PIR" id="JC7112">
    <property type="entry name" value="JC7112"/>
</dbReference>
<dbReference type="RefSeq" id="NP_001155044.1">
    <molecule id="Q9ULX9-1"/>
    <property type="nucleotide sequence ID" value="NM_001161572.2"/>
</dbReference>
<dbReference type="RefSeq" id="NP_001155045.1">
    <molecule id="Q9ULX9-1"/>
    <property type="nucleotide sequence ID" value="NM_001161573.1"/>
</dbReference>
<dbReference type="RefSeq" id="NP_001155046.1">
    <molecule id="Q9ULX9-2"/>
    <property type="nucleotide sequence ID" value="NM_001161574.2"/>
</dbReference>
<dbReference type="RefSeq" id="NP_036455.1">
    <molecule id="Q9ULX9-1"/>
    <property type="nucleotide sequence ID" value="NM_012323.4"/>
</dbReference>
<dbReference type="SMR" id="Q9ULX9"/>
<dbReference type="BioGRID" id="117264">
    <property type="interactions" value="48"/>
</dbReference>
<dbReference type="ComplexPortal" id="CPX-2484">
    <property type="entry name" value="bZIP transcription factor complex, BACH2-MAFF"/>
</dbReference>
<dbReference type="ComplexPortal" id="CPX-6480">
    <property type="entry name" value="bZIP transcription factor complex, ATF3-MAFF"/>
</dbReference>
<dbReference type="ComplexPortal" id="CPX-7085">
    <property type="entry name" value="bZIP transcription factor complex, BATF2-MAFF"/>
</dbReference>
<dbReference type="ComplexPortal" id="CPX-7103">
    <property type="entry name" value="bZIP transcription factor complex, BATF3-MAFF"/>
</dbReference>
<dbReference type="ComplexPortal" id="CPX-7165">
    <property type="entry name" value="bZIP transcription factor complex, BACH1-MAFF"/>
</dbReference>
<dbReference type="FunCoup" id="Q9ULX9">
    <property type="interactions" value="3595"/>
</dbReference>
<dbReference type="IntAct" id="Q9ULX9">
    <property type="interactions" value="31"/>
</dbReference>
<dbReference type="MINT" id="Q9ULX9"/>
<dbReference type="STRING" id="9606.ENSP00000442060"/>
<dbReference type="GlyGen" id="Q9ULX9">
    <property type="glycosylation" value="1 site, 1 O-linked glycan (1 site)"/>
</dbReference>
<dbReference type="iPTMnet" id="Q9ULX9"/>
<dbReference type="PhosphoSitePlus" id="Q9ULX9"/>
<dbReference type="BioMuta" id="MAFF"/>
<dbReference type="DMDM" id="21542145"/>
<dbReference type="jPOST" id="Q9ULX9"/>
<dbReference type="MassIVE" id="Q9ULX9"/>
<dbReference type="PaxDb" id="9606-ENSP00000345393"/>
<dbReference type="PeptideAtlas" id="Q9ULX9"/>
<dbReference type="ProteomicsDB" id="85150">
    <molecule id="Q9ULX9-1"/>
</dbReference>
<dbReference type="ProteomicsDB" id="85151">
    <molecule id="Q9ULX9-2"/>
</dbReference>
<dbReference type="Pumba" id="Q9ULX9"/>
<dbReference type="Antibodypedia" id="12337">
    <property type="antibodies" value="153 antibodies from 31 providers"/>
</dbReference>
<dbReference type="DNASU" id="23764"/>
<dbReference type="Ensembl" id="ENST00000338483.7">
    <molecule id="Q9ULX9-1"/>
    <property type="protein sequence ID" value="ENSP00000345393.2"/>
    <property type="gene ID" value="ENSG00000185022.12"/>
</dbReference>
<dbReference type="Ensembl" id="ENST00000407965.1">
    <molecule id="Q9ULX9-1"/>
    <property type="protein sequence ID" value="ENSP00000384094.1"/>
    <property type="gene ID" value="ENSG00000185022.12"/>
</dbReference>
<dbReference type="Ensembl" id="ENST00000426621.6">
    <molecule id="Q9ULX9-1"/>
    <property type="protein sequence ID" value="ENSP00000388882.2"/>
    <property type="gene ID" value="ENSG00000185022.12"/>
</dbReference>
<dbReference type="Ensembl" id="ENST00000538320.5">
    <molecule id="Q9ULX9-1"/>
    <property type="protein sequence ID" value="ENSP00000442060.1"/>
    <property type="gene ID" value="ENSG00000185022.12"/>
</dbReference>
<dbReference type="Ensembl" id="ENST00000538999.1">
    <molecule id="Q9ULX9-2"/>
    <property type="protein sequence ID" value="ENSP00000441482.1"/>
    <property type="gene ID" value="ENSG00000185022.12"/>
</dbReference>
<dbReference type="GeneID" id="23764"/>
<dbReference type="KEGG" id="hsa:23764"/>
<dbReference type="MANE-Select" id="ENST00000338483.7">
    <property type="protein sequence ID" value="ENSP00000345393.2"/>
    <property type="RefSeq nucleotide sequence ID" value="NM_012323.4"/>
    <property type="RefSeq protein sequence ID" value="NP_036455.1"/>
</dbReference>
<dbReference type="UCSC" id="uc003avc.4">
    <molecule id="Q9ULX9-1"/>
    <property type="organism name" value="human"/>
</dbReference>
<dbReference type="AGR" id="HGNC:6780"/>
<dbReference type="CTD" id="23764"/>
<dbReference type="DisGeNET" id="23764"/>
<dbReference type="GeneCards" id="MAFF"/>
<dbReference type="HGNC" id="HGNC:6780">
    <property type="gene designation" value="MAFF"/>
</dbReference>
<dbReference type="HPA" id="ENSG00000185022">
    <property type="expression patterns" value="Low tissue specificity"/>
</dbReference>
<dbReference type="MIM" id="604877">
    <property type="type" value="gene"/>
</dbReference>
<dbReference type="neXtProt" id="NX_Q9ULX9"/>
<dbReference type="OpenTargets" id="ENSG00000185022"/>
<dbReference type="PharmGKB" id="PA30538"/>
<dbReference type="VEuPathDB" id="HostDB:ENSG00000185022"/>
<dbReference type="eggNOG" id="KOG4196">
    <property type="taxonomic scope" value="Eukaryota"/>
</dbReference>
<dbReference type="GeneTree" id="ENSGT00940000161112"/>
<dbReference type="HOGENOM" id="CLU_112948_0_1_1"/>
<dbReference type="InParanoid" id="Q9ULX9"/>
<dbReference type="OMA" id="CDFQAPL"/>
<dbReference type="OrthoDB" id="5974330at2759"/>
<dbReference type="PAN-GO" id="Q9ULX9">
    <property type="GO annotations" value="5 GO annotations based on evolutionary models"/>
</dbReference>
<dbReference type="PhylomeDB" id="Q9ULX9"/>
<dbReference type="TreeFam" id="TF325689"/>
<dbReference type="PathwayCommons" id="Q9ULX9"/>
<dbReference type="Reactome" id="R-HSA-983231">
    <property type="pathway name" value="Factors involved in megakaryocyte development and platelet production"/>
</dbReference>
<dbReference type="SignaLink" id="Q9ULX9"/>
<dbReference type="SIGNOR" id="Q9ULX9"/>
<dbReference type="BioGRID-ORCS" id="23764">
    <property type="hits" value="31 hits in 1171 CRISPR screens"/>
</dbReference>
<dbReference type="ChiTaRS" id="MAFF">
    <property type="organism name" value="human"/>
</dbReference>
<dbReference type="GeneWiki" id="MAFF_(gene)"/>
<dbReference type="GenomeRNAi" id="23764"/>
<dbReference type="Pharos" id="Q9ULX9">
    <property type="development level" value="Tbio"/>
</dbReference>
<dbReference type="PRO" id="PR:Q9ULX9"/>
<dbReference type="Proteomes" id="UP000005640">
    <property type="component" value="Chromosome 22"/>
</dbReference>
<dbReference type="RNAct" id="Q9ULX9">
    <property type="molecule type" value="protein"/>
</dbReference>
<dbReference type="Bgee" id="ENSG00000185022">
    <property type="expression patterns" value="Expressed in amniotic fluid and 202 other cell types or tissues"/>
</dbReference>
<dbReference type="ExpressionAtlas" id="Q9ULX9">
    <property type="expression patterns" value="baseline and differential"/>
</dbReference>
<dbReference type="GO" id="GO:0000785">
    <property type="term" value="C:chromatin"/>
    <property type="evidence" value="ECO:0000247"/>
    <property type="project" value="NTNU_SB"/>
</dbReference>
<dbReference type="GO" id="GO:0005739">
    <property type="term" value="C:mitochondrion"/>
    <property type="evidence" value="ECO:0000314"/>
    <property type="project" value="HPA"/>
</dbReference>
<dbReference type="GO" id="GO:0005654">
    <property type="term" value="C:nucleoplasm"/>
    <property type="evidence" value="ECO:0000314"/>
    <property type="project" value="HPA"/>
</dbReference>
<dbReference type="GO" id="GO:0005634">
    <property type="term" value="C:nucleus"/>
    <property type="evidence" value="ECO:0000318"/>
    <property type="project" value="GO_Central"/>
</dbReference>
<dbReference type="GO" id="GO:0090575">
    <property type="term" value="C:RNA polymerase II transcription regulator complex"/>
    <property type="evidence" value="ECO:0000353"/>
    <property type="project" value="ComplexPortal"/>
</dbReference>
<dbReference type="GO" id="GO:0001228">
    <property type="term" value="F:DNA-binding transcription activator activity, RNA polymerase II-specific"/>
    <property type="evidence" value="ECO:0000314"/>
    <property type="project" value="NTNU_SB"/>
</dbReference>
<dbReference type="GO" id="GO:0000981">
    <property type="term" value="F:DNA-binding transcription factor activity, RNA polymerase II-specific"/>
    <property type="evidence" value="ECO:0000247"/>
    <property type="project" value="NTNU_SB"/>
</dbReference>
<dbReference type="GO" id="GO:0000978">
    <property type="term" value="F:RNA polymerase II cis-regulatory region sequence-specific DNA binding"/>
    <property type="evidence" value="ECO:0000318"/>
    <property type="project" value="GO_Central"/>
</dbReference>
<dbReference type="GO" id="GO:0043565">
    <property type="term" value="F:sequence-specific DNA binding"/>
    <property type="evidence" value="ECO:0000314"/>
    <property type="project" value="NTNU_SB"/>
</dbReference>
<dbReference type="GO" id="GO:1990837">
    <property type="term" value="F:sequence-specific double-stranded DNA binding"/>
    <property type="evidence" value="ECO:0000314"/>
    <property type="project" value="ARUK-UCL"/>
</dbReference>
<dbReference type="GO" id="GO:0001701">
    <property type="term" value="P:in utero embryonic development"/>
    <property type="evidence" value="ECO:0007669"/>
    <property type="project" value="Ensembl"/>
</dbReference>
<dbReference type="GO" id="GO:0000122">
    <property type="term" value="P:negative regulation of transcription by RNA polymerase II"/>
    <property type="evidence" value="ECO:0000303"/>
    <property type="project" value="ComplexPortal"/>
</dbReference>
<dbReference type="GO" id="GO:0007567">
    <property type="term" value="P:parturition"/>
    <property type="evidence" value="ECO:0000304"/>
    <property type="project" value="ProtInc"/>
</dbReference>
<dbReference type="GO" id="GO:0045944">
    <property type="term" value="P:positive regulation of transcription by RNA polymerase II"/>
    <property type="evidence" value="ECO:0000314"/>
    <property type="project" value="NTNU_SB"/>
</dbReference>
<dbReference type="GO" id="GO:0045604">
    <property type="term" value="P:regulation of epidermal cell differentiation"/>
    <property type="evidence" value="ECO:0000318"/>
    <property type="project" value="GO_Central"/>
</dbReference>
<dbReference type="GO" id="GO:0006357">
    <property type="term" value="P:regulation of transcription by RNA polymerase II"/>
    <property type="evidence" value="ECO:0000318"/>
    <property type="project" value="GO_Central"/>
</dbReference>
<dbReference type="GO" id="GO:0035914">
    <property type="term" value="P:skeletal muscle cell differentiation"/>
    <property type="evidence" value="ECO:0007669"/>
    <property type="project" value="Ensembl"/>
</dbReference>
<dbReference type="CDD" id="cd14717">
    <property type="entry name" value="bZIP_Maf_small"/>
    <property type="match status" value="1"/>
</dbReference>
<dbReference type="FunFam" id="1.20.5.170:FF:000011">
    <property type="entry name" value="Transcription factor MafG, putative"/>
    <property type="match status" value="1"/>
</dbReference>
<dbReference type="Gene3D" id="1.20.5.170">
    <property type="match status" value="1"/>
</dbReference>
<dbReference type="InterPro" id="IPR004827">
    <property type="entry name" value="bZIP"/>
</dbReference>
<dbReference type="InterPro" id="IPR004826">
    <property type="entry name" value="bZIP_Maf"/>
</dbReference>
<dbReference type="InterPro" id="IPR046347">
    <property type="entry name" value="bZIP_sf"/>
</dbReference>
<dbReference type="InterPro" id="IPR008917">
    <property type="entry name" value="TF_DNA-bd_sf"/>
</dbReference>
<dbReference type="InterPro" id="IPR024874">
    <property type="entry name" value="Transcription_factor_Maf_fam"/>
</dbReference>
<dbReference type="PANTHER" id="PTHR10129">
    <property type="entry name" value="TRANSCRIPTION FACTOR MAF"/>
    <property type="match status" value="1"/>
</dbReference>
<dbReference type="PANTHER" id="PTHR10129:SF25">
    <property type="entry name" value="TRANSCRIPTION FACTOR MAFF"/>
    <property type="match status" value="1"/>
</dbReference>
<dbReference type="Pfam" id="PF03131">
    <property type="entry name" value="bZIP_Maf"/>
    <property type="match status" value="1"/>
</dbReference>
<dbReference type="SMART" id="SM00338">
    <property type="entry name" value="BRLZ"/>
    <property type="match status" value="1"/>
</dbReference>
<dbReference type="SUPFAM" id="SSF47454">
    <property type="entry name" value="A DNA-binding domain in eukaryotic transcription factors"/>
    <property type="match status" value="1"/>
</dbReference>
<dbReference type="SUPFAM" id="SSF57959">
    <property type="entry name" value="Leucine zipper domain"/>
    <property type="match status" value="1"/>
</dbReference>
<dbReference type="PROSITE" id="PS50217">
    <property type="entry name" value="BZIP"/>
    <property type="match status" value="1"/>
</dbReference>
<organism>
    <name type="scientific">Homo sapiens</name>
    <name type="common">Human</name>
    <dbReference type="NCBI Taxonomy" id="9606"/>
    <lineage>
        <taxon>Eukaryota</taxon>
        <taxon>Metazoa</taxon>
        <taxon>Chordata</taxon>
        <taxon>Craniata</taxon>
        <taxon>Vertebrata</taxon>
        <taxon>Euteleostomi</taxon>
        <taxon>Mammalia</taxon>
        <taxon>Eutheria</taxon>
        <taxon>Euarchontoglires</taxon>
        <taxon>Primates</taxon>
        <taxon>Haplorrhini</taxon>
        <taxon>Catarrhini</taxon>
        <taxon>Hominidae</taxon>
        <taxon>Homo</taxon>
    </lineage>
</organism>
<protein>
    <recommendedName>
        <fullName>Transcription factor MafF</fullName>
    </recommendedName>
    <alternativeName>
        <fullName>U-Maf</fullName>
    </alternativeName>
    <alternativeName>
        <fullName>V-maf musculoaponeurotic fibrosarcoma oncogene homolog F</fullName>
    </alternativeName>
</protein>
<reference key="1">
    <citation type="journal article" date="1999" name="Biochem. Biophys. Res. Commun.">
        <title>Molecular cloning of a human MafF homologue, which specifically binds to the oxytocin receptor gene in term myometrium.</title>
        <authorList>
            <person name="Kimura T."/>
            <person name="Ivell R."/>
            <person name="Rust W."/>
            <person name="Mizumoto Y."/>
            <person name="Ogita K."/>
            <person name="Kusui C."/>
            <person name="Matsumura Y."/>
            <person name="Azuma C."/>
            <person name="Murata Y."/>
        </authorList>
    </citation>
    <scope>NUCLEOTIDE SEQUENCE [MRNA] (ISOFORM 1)</scope>
    <scope>FUNCTION</scope>
    <source>
        <tissue>Term myometrium</tissue>
    </source>
</reference>
<reference key="2">
    <citation type="journal article" date="2004" name="Nat. Genet.">
        <title>Complete sequencing and characterization of 21,243 full-length human cDNAs.</title>
        <authorList>
            <person name="Ota T."/>
            <person name="Suzuki Y."/>
            <person name="Nishikawa T."/>
            <person name="Otsuki T."/>
            <person name="Sugiyama T."/>
            <person name="Irie R."/>
            <person name="Wakamatsu A."/>
            <person name="Hayashi K."/>
            <person name="Sato H."/>
            <person name="Nagai K."/>
            <person name="Kimura K."/>
            <person name="Makita H."/>
            <person name="Sekine M."/>
            <person name="Obayashi M."/>
            <person name="Nishi T."/>
            <person name="Shibahara T."/>
            <person name="Tanaka T."/>
            <person name="Ishii S."/>
            <person name="Yamamoto J."/>
            <person name="Saito K."/>
            <person name="Kawai Y."/>
            <person name="Isono Y."/>
            <person name="Nakamura Y."/>
            <person name="Nagahari K."/>
            <person name="Murakami K."/>
            <person name="Yasuda T."/>
            <person name="Iwayanagi T."/>
            <person name="Wagatsuma M."/>
            <person name="Shiratori A."/>
            <person name="Sudo H."/>
            <person name="Hosoiri T."/>
            <person name="Kaku Y."/>
            <person name="Kodaira H."/>
            <person name="Kondo H."/>
            <person name="Sugawara M."/>
            <person name="Takahashi M."/>
            <person name="Kanda K."/>
            <person name="Yokoi T."/>
            <person name="Furuya T."/>
            <person name="Kikkawa E."/>
            <person name="Omura Y."/>
            <person name="Abe K."/>
            <person name="Kamihara K."/>
            <person name="Katsuta N."/>
            <person name="Sato K."/>
            <person name="Tanikawa M."/>
            <person name="Yamazaki M."/>
            <person name="Ninomiya K."/>
            <person name="Ishibashi T."/>
            <person name="Yamashita H."/>
            <person name="Murakawa K."/>
            <person name="Fujimori K."/>
            <person name="Tanai H."/>
            <person name="Kimata M."/>
            <person name="Watanabe M."/>
            <person name="Hiraoka S."/>
            <person name="Chiba Y."/>
            <person name="Ishida S."/>
            <person name="Ono Y."/>
            <person name="Takiguchi S."/>
            <person name="Watanabe S."/>
            <person name="Yosida M."/>
            <person name="Hotuta T."/>
            <person name="Kusano J."/>
            <person name="Kanehori K."/>
            <person name="Takahashi-Fujii A."/>
            <person name="Hara H."/>
            <person name="Tanase T.-O."/>
            <person name="Nomura Y."/>
            <person name="Togiya S."/>
            <person name="Komai F."/>
            <person name="Hara R."/>
            <person name="Takeuchi K."/>
            <person name="Arita M."/>
            <person name="Imose N."/>
            <person name="Musashino K."/>
            <person name="Yuuki H."/>
            <person name="Oshima A."/>
            <person name="Sasaki N."/>
            <person name="Aotsuka S."/>
            <person name="Yoshikawa Y."/>
            <person name="Matsunawa H."/>
            <person name="Ichihara T."/>
            <person name="Shiohata N."/>
            <person name="Sano S."/>
            <person name="Moriya S."/>
            <person name="Momiyama H."/>
            <person name="Satoh N."/>
            <person name="Takami S."/>
            <person name="Terashima Y."/>
            <person name="Suzuki O."/>
            <person name="Nakagawa S."/>
            <person name="Senoh A."/>
            <person name="Mizoguchi H."/>
            <person name="Goto Y."/>
            <person name="Shimizu F."/>
            <person name="Wakebe H."/>
            <person name="Hishigaki H."/>
            <person name="Watanabe T."/>
            <person name="Sugiyama A."/>
            <person name="Takemoto M."/>
            <person name="Kawakami B."/>
            <person name="Yamazaki M."/>
            <person name="Watanabe K."/>
            <person name="Kumagai A."/>
            <person name="Itakura S."/>
            <person name="Fukuzumi Y."/>
            <person name="Fujimori Y."/>
            <person name="Komiyama M."/>
            <person name="Tashiro H."/>
            <person name="Tanigami A."/>
            <person name="Fujiwara T."/>
            <person name="Ono T."/>
            <person name="Yamada K."/>
            <person name="Fujii Y."/>
            <person name="Ozaki K."/>
            <person name="Hirao M."/>
            <person name="Ohmori Y."/>
            <person name="Kawabata A."/>
            <person name="Hikiji T."/>
            <person name="Kobatake N."/>
            <person name="Inagaki H."/>
            <person name="Ikema Y."/>
            <person name="Okamoto S."/>
            <person name="Okitani R."/>
            <person name="Kawakami T."/>
            <person name="Noguchi S."/>
            <person name="Itoh T."/>
            <person name="Shigeta K."/>
            <person name="Senba T."/>
            <person name="Matsumura K."/>
            <person name="Nakajima Y."/>
            <person name="Mizuno T."/>
            <person name="Morinaga M."/>
            <person name="Sasaki M."/>
            <person name="Togashi T."/>
            <person name="Oyama M."/>
            <person name="Hata H."/>
            <person name="Watanabe M."/>
            <person name="Komatsu T."/>
            <person name="Mizushima-Sugano J."/>
            <person name="Satoh T."/>
            <person name="Shirai Y."/>
            <person name="Takahashi Y."/>
            <person name="Nakagawa K."/>
            <person name="Okumura K."/>
            <person name="Nagase T."/>
            <person name="Nomura N."/>
            <person name="Kikuchi H."/>
            <person name="Masuho Y."/>
            <person name="Yamashita R."/>
            <person name="Nakai K."/>
            <person name="Yada T."/>
            <person name="Nakamura Y."/>
            <person name="Ohara O."/>
            <person name="Isogai T."/>
            <person name="Sugano S."/>
        </authorList>
    </citation>
    <scope>NUCLEOTIDE SEQUENCE [LARGE SCALE MRNA] (ISOFORMS 1 AND 2)</scope>
    <source>
        <tissue>Placenta</tissue>
        <tissue>Small intestine</tissue>
    </source>
</reference>
<reference key="3">
    <citation type="journal article" date="1999" name="Nature">
        <title>The DNA sequence of human chromosome 22.</title>
        <authorList>
            <person name="Dunham I."/>
            <person name="Hunt A.R."/>
            <person name="Collins J.E."/>
            <person name="Bruskiewich R."/>
            <person name="Beare D.M."/>
            <person name="Clamp M."/>
            <person name="Smink L.J."/>
            <person name="Ainscough R."/>
            <person name="Almeida J.P."/>
            <person name="Babbage A.K."/>
            <person name="Bagguley C."/>
            <person name="Bailey J."/>
            <person name="Barlow K.F."/>
            <person name="Bates K.N."/>
            <person name="Beasley O.P."/>
            <person name="Bird C.P."/>
            <person name="Blakey S.E."/>
            <person name="Bridgeman A.M."/>
            <person name="Buck D."/>
            <person name="Burgess J."/>
            <person name="Burrill W.D."/>
            <person name="Burton J."/>
            <person name="Carder C."/>
            <person name="Carter N.P."/>
            <person name="Chen Y."/>
            <person name="Clark G."/>
            <person name="Clegg S.M."/>
            <person name="Cobley V.E."/>
            <person name="Cole C.G."/>
            <person name="Collier R.E."/>
            <person name="Connor R."/>
            <person name="Conroy D."/>
            <person name="Corby N.R."/>
            <person name="Coville G.J."/>
            <person name="Cox A.V."/>
            <person name="Davis J."/>
            <person name="Dawson E."/>
            <person name="Dhami P.D."/>
            <person name="Dockree C."/>
            <person name="Dodsworth S.J."/>
            <person name="Durbin R.M."/>
            <person name="Ellington A.G."/>
            <person name="Evans K.L."/>
            <person name="Fey J.M."/>
            <person name="Fleming K."/>
            <person name="French L."/>
            <person name="Garner A.A."/>
            <person name="Gilbert J.G.R."/>
            <person name="Goward M.E."/>
            <person name="Grafham D.V."/>
            <person name="Griffiths M.N.D."/>
            <person name="Hall C."/>
            <person name="Hall R.E."/>
            <person name="Hall-Tamlyn G."/>
            <person name="Heathcott R.W."/>
            <person name="Ho S."/>
            <person name="Holmes S."/>
            <person name="Hunt S.E."/>
            <person name="Jones M.C."/>
            <person name="Kershaw J."/>
            <person name="Kimberley A.M."/>
            <person name="King A."/>
            <person name="Laird G.K."/>
            <person name="Langford C.F."/>
            <person name="Leversha M.A."/>
            <person name="Lloyd C."/>
            <person name="Lloyd D.M."/>
            <person name="Martyn I.D."/>
            <person name="Mashreghi-Mohammadi M."/>
            <person name="Matthews L.H."/>
            <person name="Mccann O.T."/>
            <person name="Mcclay J."/>
            <person name="Mclaren S."/>
            <person name="McMurray A.A."/>
            <person name="Milne S.A."/>
            <person name="Mortimore B.J."/>
            <person name="Odell C.N."/>
            <person name="Pavitt R."/>
            <person name="Pearce A.V."/>
            <person name="Pearson D."/>
            <person name="Phillimore B.J.C.T."/>
            <person name="Phillips S.H."/>
            <person name="Plumb R.W."/>
            <person name="Ramsay H."/>
            <person name="Ramsey Y."/>
            <person name="Rogers L."/>
            <person name="Ross M.T."/>
            <person name="Scott C.E."/>
            <person name="Sehra H.K."/>
            <person name="Skuce C.D."/>
            <person name="Smalley S."/>
            <person name="Smith M.L."/>
            <person name="Soderlund C."/>
            <person name="Spragon L."/>
            <person name="Steward C.A."/>
            <person name="Sulston J.E."/>
            <person name="Swann R.M."/>
            <person name="Vaudin M."/>
            <person name="Wall M."/>
            <person name="Wallis J.M."/>
            <person name="Whiteley M.N."/>
            <person name="Willey D.L."/>
            <person name="Williams L."/>
            <person name="Williams S.A."/>
            <person name="Williamson H."/>
            <person name="Wilmer T.E."/>
            <person name="Wilming L."/>
            <person name="Wright C.L."/>
            <person name="Hubbard T."/>
            <person name="Bentley D.R."/>
            <person name="Beck S."/>
            <person name="Rogers J."/>
            <person name="Shimizu N."/>
            <person name="Minoshima S."/>
            <person name="Kawasaki K."/>
            <person name="Sasaki T."/>
            <person name="Asakawa S."/>
            <person name="Kudoh J."/>
            <person name="Shintani A."/>
            <person name="Shibuya K."/>
            <person name="Yoshizaki Y."/>
            <person name="Aoki N."/>
            <person name="Mitsuyama S."/>
            <person name="Roe B.A."/>
            <person name="Chen F."/>
            <person name="Chu L."/>
            <person name="Crabtree J."/>
            <person name="Deschamps S."/>
            <person name="Do A."/>
            <person name="Do T."/>
            <person name="Dorman A."/>
            <person name="Fang F."/>
            <person name="Fu Y."/>
            <person name="Hu P."/>
            <person name="Hua A."/>
            <person name="Kenton S."/>
            <person name="Lai H."/>
            <person name="Lao H.I."/>
            <person name="Lewis J."/>
            <person name="Lewis S."/>
            <person name="Lin S.-P."/>
            <person name="Loh P."/>
            <person name="Malaj E."/>
            <person name="Nguyen T."/>
            <person name="Pan H."/>
            <person name="Phan S."/>
            <person name="Qi S."/>
            <person name="Qian Y."/>
            <person name="Ray L."/>
            <person name="Ren Q."/>
            <person name="Shaull S."/>
            <person name="Sloan D."/>
            <person name="Song L."/>
            <person name="Wang Q."/>
            <person name="Wang Y."/>
            <person name="Wang Z."/>
            <person name="White J."/>
            <person name="Willingham D."/>
            <person name="Wu H."/>
            <person name="Yao Z."/>
            <person name="Zhan M."/>
            <person name="Zhang G."/>
            <person name="Chissoe S."/>
            <person name="Murray J."/>
            <person name="Miller N."/>
            <person name="Minx P."/>
            <person name="Fulton R."/>
            <person name="Johnson D."/>
            <person name="Bemis G."/>
            <person name="Bentley D."/>
            <person name="Bradshaw H."/>
            <person name="Bourne S."/>
            <person name="Cordes M."/>
            <person name="Du Z."/>
            <person name="Fulton L."/>
            <person name="Goela D."/>
            <person name="Graves T."/>
            <person name="Hawkins J."/>
            <person name="Hinds K."/>
            <person name="Kemp K."/>
            <person name="Latreille P."/>
            <person name="Layman D."/>
            <person name="Ozersky P."/>
            <person name="Rohlfing T."/>
            <person name="Scheet P."/>
            <person name="Walker C."/>
            <person name="Wamsley A."/>
            <person name="Wohldmann P."/>
            <person name="Pepin K."/>
            <person name="Nelson J."/>
            <person name="Korf I."/>
            <person name="Bedell J.A."/>
            <person name="Hillier L.W."/>
            <person name="Mardis E."/>
            <person name="Waterston R."/>
            <person name="Wilson R."/>
            <person name="Emanuel B.S."/>
            <person name="Shaikh T."/>
            <person name="Kurahashi H."/>
            <person name="Saitta S."/>
            <person name="Budarf M.L."/>
            <person name="McDermid H.E."/>
            <person name="Johnson A."/>
            <person name="Wong A.C.C."/>
            <person name="Morrow B.E."/>
            <person name="Edelmann L."/>
            <person name="Kim U.J."/>
            <person name="Shizuya H."/>
            <person name="Simon M.I."/>
            <person name="Dumanski J.P."/>
            <person name="Peyrard M."/>
            <person name="Kedra D."/>
            <person name="Seroussi E."/>
            <person name="Fransson I."/>
            <person name="Tapia I."/>
            <person name="Bruder C.E."/>
            <person name="O'Brien K.P."/>
            <person name="Wilkinson P."/>
            <person name="Bodenteich A."/>
            <person name="Hartman K."/>
            <person name="Hu X."/>
            <person name="Khan A.S."/>
            <person name="Lane L."/>
            <person name="Tilahun Y."/>
            <person name="Wright H."/>
        </authorList>
    </citation>
    <scope>NUCLEOTIDE SEQUENCE [LARGE SCALE GENOMIC DNA]</scope>
</reference>
<reference key="4">
    <citation type="journal article" date="2004" name="Genome Res.">
        <title>The status, quality, and expansion of the NIH full-length cDNA project: the Mammalian Gene Collection (MGC).</title>
        <authorList>
            <consortium name="The MGC Project Team"/>
        </authorList>
    </citation>
    <scope>NUCLEOTIDE SEQUENCE [LARGE SCALE MRNA] (ISOFORM 1)</scope>
    <source>
        <tissue>Placenta</tissue>
        <tissue>Skin</tissue>
    </source>
</reference>
<reference key="5">
    <citation type="journal article" date="1996" name="Nucleic Acids Res.">
        <title>Small Maf proteins interact with the human transcription factor TCF11/Nrf1/LCR-F1.</title>
        <authorList>
            <person name="Johnsen O."/>
            <person name="Skammelsrud N."/>
            <person name="Luna L."/>
            <person name="Nishizawa M."/>
            <person name="Prydz H."/>
            <person name="Kolstoe A.B."/>
        </authorList>
    </citation>
    <scope>FUNCTION</scope>
    <scope>DNA-BINDING</scope>
    <scope>INTERACTION WITH NFE2L1</scope>
</reference>
<reference key="6">
    <citation type="journal article" date="2002" name="Biochem. J.">
        <title>Differential induction of mafF, mafG and mafK expression by electrophile-response-element activators.</title>
        <authorList>
            <person name="Moran J.A."/>
            <person name="Dahl E.L."/>
            <person name="Mulcahy R.T."/>
        </authorList>
    </citation>
    <scope>INDUCTION</scope>
</reference>
<reference key="7">
    <citation type="journal article" date="2006" name="Arch. Biochem. Biophys.">
        <title>The novel human gene MIP functions as a co-activator of hMafF.</title>
        <authorList>
            <person name="Ye X."/>
            <person name="Li Y."/>
            <person name="Huang Q."/>
            <person name="Yu Y."/>
            <person name="Yuan H."/>
            <person name="Wang P."/>
            <person name="Wan D."/>
            <person name="Gu J."/>
            <person name="Huo K."/>
            <person name="Li Y.-Y."/>
            <person name="Lu H."/>
        </authorList>
    </citation>
    <scope>FUNCTION</scope>
    <scope>INTERACTION WITH MIP</scope>
</reference>
<name>MAFF_HUMAN</name>
<keyword id="KW-0025">Alternative splicing</keyword>
<keyword id="KW-0238">DNA-binding</keyword>
<keyword id="KW-0539">Nucleus</keyword>
<keyword id="KW-1267">Proteomics identification</keyword>
<keyword id="KW-1185">Reference proteome</keyword>
<keyword id="KW-0678">Repressor</keyword>
<keyword id="KW-0346">Stress response</keyword>
<keyword id="KW-0804">Transcription</keyword>
<keyword id="KW-0805">Transcription regulation</keyword>
<sequence>MSVDPLSSKALKIKRELSENTPHLSDEALMGLSVRELNRHLRGLSAEEVTRLKQRRRTLKNRGYAASCRVKRVCQKEELQKQKSELEREVDKLARENAAMRLELDALRGKCEALQGFARSVAAARGPATLVAPASVITIVKSTPGSGSGPAHGPDPAHGPASCS</sequence>
<gene>
    <name type="primary">MAFF</name>
</gene>
<feature type="chain" id="PRO_0000076497" description="Transcription factor MafF">
    <location>
        <begin position="1"/>
        <end position="164"/>
    </location>
</feature>
<feature type="domain" description="bZIP" evidence="1">
    <location>
        <begin position="51"/>
        <end position="114"/>
    </location>
</feature>
<feature type="region of interest" description="Basic motif" evidence="1">
    <location>
        <begin position="51"/>
        <end position="76"/>
    </location>
</feature>
<feature type="region of interest" description="Leucine-zipper" evidence="1">
    <location>
        <begin position="79"/>
        <end position="93"/>
    </location>
</feature>
<feature type="region of interest" description="Disordered" evidence="2">
    <location>
        <begin position="141"/>
        <end position="164"/>
    </location>
</feature>
<feature type="compositionally biased region" description="Low complexity" evidence="2">
    <location>
        <begin position="149"/>
        <end position="164"/>
    </location>
</feature>
<feature type="splice variant" id="VSP_043029" description="In isoform 2." evidence="7">
    <location>
        <begin position="1"/>
        <end position="29"/>
    </location>
</feature>
<feature type="sequence conflict" description="In Ref. 2; BAA86871." evidence="8" ref="2">
    <original>G</original>
    <variation>A</variation>
    <location>
        <position position="116"/>
    </location>
</feature>
<evidence type="ECO:0000255" key="1">
    <source>
        <dbReference type="PROSITE-ProRule" id="PRU00978"/>
    </source>
</evidence>
<evidence type="ECO:0000256" key="2">
    <source>
        <dbReference type="SAM" id="MobiDB-lite"/>
    </source>
</evidence>
<evidence type="ECO:0000269" key="3">
    <source>
    </source>
</evidence>
<evidence type="ECO:0000269" key="4">
    <source>
    </source>
</evidence>
<evidence type="ECO:0000269" key="5">
    <source>
    </source>
</evidence>
<evidence type="ECO:0000269" key="6">
    <source>
    </source>
</evidence>
<evidence type="ECO:0000303" key="7">
    <source>
    </source>
</evidence>
<evidence type="ECO:0000305" key="8"/>
<accession>Q9ULX9</accession>
<accession>B4DV49</accession>
<accession>Q9Y525</accession>